<accession>C0Q6U2</accession>
<reference key="1">
    <citation type="journal article" date="2009" name="PLoS ONE">
        <title>Salmonella paratyphi C: genetic divergence from Salmonella choleraesuis and pathogenic convergence with Salmonella typhi.</title>
        <authorList>
            <person name="Liu W.-Q."/>
            <person name="Feng Y."/>
            <person name="Wang Y."/>
            <person name="Zou Q.-H."/>
            <person name="Chen F."/>
            <person name="Guo J.-T."/>
            <person name="Peng Y.-H."/>
            <person name="Jin Y."/>
            <person name="Li Y.-G."/>
            <person name="Hu S.-N."/>
            <person name="Johnston R.N."/>
            <person name="Liu G.-R."/>
            <person name="Liu S.-L."/>
        </authorList>
    </citation>
    <scope>NUCLEOTIDE SEQUENCE [LARGE SCALE GENOMIC DNA]</scope>
    <source>
        <strain>RKS4594</strain>
    </source>
</reference>
<dbReference type="EC" id="1.2.1.41" evidence="1"/>
<dbReference type="EMBL" id="CP000857">
    <property type="protein sequence ID" value="ACN44521.1"/>
    <property type="molecule type" value="Genomic_DNA"/>
</dbReference>
<dbReference type="RefSeq" id="WP_000893222.1">
    <property type="nucleotide sequence ID" value="NC_012125.1"/>
</dbReference>
<dbReference type="SMR" id="C0Q6U2"/>
<dbReference type="KEGG" id="sei:SPC_0334"/>
<dbReference type="HOGENOM" id="CLU_030231_0_0_6"/>
<dbReference type="UniPathway" id="UPA00098">
    <property type="reaction ID" value="UER00360"/>
</dbReference>
<dbReference type="Proteomes" id="UP000001599">
    <property type="component" value="Chromosome"/>
</dbReference>
<dbReference type="GO" id="GO:0005737">
    <property type="term" value="C:cytoplasm"/>
    <property type="evidence" value="ECO:0007669"/>
    <property type="project" value="UniProtKB-SubCell"/>
</dbReference>
<dbReference type="GO" id="GO:0004350">
    <property type="term" value="F:glutamate-5-semialdehyde dehydrogenase activity"/>
    <property type="evidence" value="ECO:0007669"/>
    <property type="project" value="UniProtKB-UniRule"/>
</dbReference>
<dbReference type="GO" id="GO:0050661">
    <property type="term" value="F:NADP binding"/>
    <property type="evidence" value="ECO:0007669"/>
    <property type="project" value="InterPro"/>
</dbReference>
<dbReference type="GO" id="GO:0055129">
    <property type="term" value="P:L-proline biosynthetic process"/>
    <property type="evidence" value="ECO:0007669"/>
    <property type="project" value="UniProtKB-UniRule"/>
</dbReference>
<dbReference type="CDD" id="cd07079">
    <property type="entry name" value="ALDH_F18-19_ProA-GPR"/>
    <property type="match status" value="1"/>
</dbReference>
<dbReference type="FunFam" id="3.40.309.10:FF:000006">
    <property type="entry name" value="Gamma-glutamyl phosphate reductase"/>
    <property type="match status" value="1"/>
</dbReference>
<dbReference type="Gene3D" id="3.40.605.10">
    <property type="entry name" value="Aldehyde Dehydrogenase, Chain A, domain 1"/>
    <property type="match status" value="1"/>
</dbReference>
<dbReference type="Gene3D" id="3.40.309.10">
    <property type="entry name" value="Aldehyde Dehydrogenase, Chain A, domain 2"/>
    <property type="match status" value="1"/>
</dbReference>
<dbReference type="HAMAP" id="MF_00412">
    <property type="entry name" value="ProA"/>
    <property type="match status" value="1"/>
</dbReference>
<dbReference type="InterPro" id="IPR016161">
    <property type="entry name" value="Ald_DH/histidinol_DH"/>
</dbReference>
<dbReference type="InterPro" id="IPR016163">
    <property type="entry name" value="Ald_DH_C"/>
</dbReference>
<dbReference type="InterPro" id="IPR016162">
    <property type="entry name" value="Ald_DH_N"/>
</dbReference>
<dbReference type="InterPro" id="IPR015590">
    <property type="entry name" value="Aldehyde_DH_dom"/>
</dbReference>
<dbReference type="InterPro" id="IPR020593">
    <property type="entry name" value="G-glutamylP_reductase_CS"/>
</dbReference>
<dbReference type="InterPro" id="IPR012134">
    <property type="entry name" value="Glu-5-SA_DH"/>
</dbReference>
<dbReference type="InterPro" id="IPR000965">
    <property type="entry name" value="GPR_dom"/>
</dbReference>
<dbReference type="NCBIfam" id="NF001221">
    <property type="entry name" value="PRK00197.1"/>
    <property type="match status" value="1"/>
</dbReference>
<dbReference type="NCBIfam" id="TIGR00407">
    <property type="entry name" value="proA"/>
    <property type="match status" value="1"/>
</dbReference>
<dbReference type="PANTHER" id="PTHR11063:SF8">
    <property type="entry name" value="DELTA-1-PYRROLINE-5-CARBOXYLATE SYNTHASE"/>
    <property type="match status" value="1"/>
</dbReference>
<dbReference type="PANTHER" id="PTHR11063">
    <property type="entry name" value="GLUTAMATE SEMIALDEHYDE DEHYDROGENASE"/>
    <property type="match status" value="1"/>
</dbReference>
<dbReference type="Pfam" id="PF00171">
    <property type="entry name" value="Aldedh"/>
    <property type="match status" value="1"/>
</dbReference>
<dbReference type="PIRSF" id="PIRSF000151">
    <property type="entry name" value="GPR"/>
    <property type="match status" value="1"/>
</dbReference>
<dbReference type="SUPFAM" id="SSF53720">
    <property type="entry name" value="ALDH-like"/>
    <property type="match status" value="1"/>
</dbReference>
<dbReference type="PROSITE" id="PS01223">
    <property type="entry name" value="PROA"/>
    <property type="match status" value="1"/>
</dbReference>
<sequence>MLEQMGIAAKAASYKLALLSSGEKNRVLEKIADELEAQMESILSANVQDVEQARANGLSEAMLDRLALTPARLKAIADDVRQVCNLADPVGQVIDGGLLDSGLRLERRRVPLGVVGVIYEARPNVTVDVASLCLKTGNAVILRGGKETHRTNAATVRVIQKALKACGLPEAAVQAIDNPDRSLVNEMLRMDKYIDMLIPRGGAGLHKLCREQSTIPVITGGIGVCHIFVDSSADIAPALKIIVNAKTQRPSTCNTVETLLVHQDIAERFLPALSKQMAESGVTLHGDETVMQALHGPAKLVPLKPEELDNEFLSLDLNVVVVENMDGAIAHIREHGTQHSDAILTSDMHNAARFVNEVDSAAVYVNASTRFTDGGQFGLGAEVAVSTQKLHARGPMGLEALTTYKWIGFGDGTIRA</sequence>
<gene>
    <name evidence="1" type="primary">proA</name>
    <name type="ordered locus">SPC_0334</name>
</gene>
<protein>
    <recommendedName>
        <fullName evidence="1">Gamma-glutamyl phosphate reductase</fullName>
        <shortName evidence="1">GPR</shortName>
        <ecNumber evidence="1">1.2.1.41</ecNumber>
    </recommendedName>
    <alternativeName>
        <fullName evidence="1">Glutamate-5-semialdehyde dehydrogenase</fullName>
    </alternativeName>
    <alternativeName>
        <fullName evidence="1">Glutamyl-gamma-semialdehyde dehydrogenase</fullName>
        <shortName evidence="1">GSA dehydrogenase</shortName>
    </alternativeName>
</protein>
<proteinExistence type="inferred from homology"/>
<comment type="function">
    <text evidence="1">Catalyzes the NADPH-dependent reduction of L-glutamate 5-phosphate into L-glutamate 5-semialdehyde and phosphate. The product spontaneously undergoes cyclization to form 1-pyrroline-5-carboxylate.</text>
</comment>
<comment type="catalytic activity">
    <reaction evidence="1">
        <text>L-glutamate 5-semialdehyde + phosphate + NADP(+) = L-glutamyl 5-phosphate + NADPH + H(+)</text>
        <dbReference type="Rhea" id="RHEA:19541"/>
        <dbReference type="ChEBI" id="CHEBI:15378"/>
        <dbReference type="ChEBI" id="CHEBI:43474"/>
        <dbReference type="ChEBI" id="CHEBI:57783"/>
        <dbReference type="ChEBI" id="CHEBI:58066"/>
        <dbReference type="ChEBI" id="CHEBI:58274"/>
        <dbReference type="ChEBI" id="CHEBI:58349"/>
        <dbReference type="EC" id="1.2.1.41"/>
    </reaction>
</comment>
<comment type="pathway">
    <text evidence="1">Amino-acid biosynthesis; L-proline biosynthesis; L-glutamate 5-semialdehyde from L-glutamate: step 2/2.</text>
</comment>
<comment type="subcellular location">
    <subcellularLocation>
        <location evidence="1">Cytoplasm</location>
    </subcellularLocation>
</comment>
<comment type="similarity">
    <text evidence="1">Belongs to the gamma-glutamyl phosphate reductase family.</text>
</comment>
<evidence type="ECO:0000255" key="1">
    <source>
        <dbReference type="HAMAP-Rule" id="MF_00412"/>
    </source>
</evidence>
<keyword id="KW-0028">Amino-acid biosynthesis</keyword>
<keyword id="KW-0963">Cytoplasm</keyword>
<keyword id="KW-0521">NADP</keyword>
<keyword id="KW-0560">Oxidoreductase</keyword>
<keyword id="KW-0641">Proline biosynthesis</keyword>
<feature type="chain" id="PRO_1000193651" description="Gamma-glutamyl phosphate reductase">
    <location>
        <begin position="1"/>
        <end position="416"/>
    </location>
</feature>
<name>PROA_SALPC</name>
<organism>
    <name type="scientific">Salmonella paratyphi C (strain RKS4594)</name>
    <dbReference type="NCBI Taxonomy" id="476213"/>
    <lineage>
        <taxon>Bacteria</taxon>
        <taxon>Pseudomonadati</taxon>
        <taxon>Pseudomonadota</taxon>
        <taxon>Gammaproteobacteria</taxon>
        <taxon>Enterobacterales</taxon>
        <taxon>Enterobacteriaceae</taxon>
        <taxon>Salmonella</taxon>
    </lineage>
</organism>